<accession>P15974</accession>
<gene>
    <name type="primary">Phxr4</name>
</gene>
<reference key="1">
    <citation type="journal article" date="1988" name="Nucleic Acids Res.">
        <title>Mouse spleen derived cDNA clones containing per repeat sequence.</title>
        <authorList>
            <person name="Nishimatsu S."/>
            <person name="Murakami K."/>
            <person name="Mitsui Y."/>
            <person name="Ishida N."/>
        </authorList>
    </citation>
    <scope>NUCLEOTIDE SEQUENCE [MRNA]</scope>
    <source>
        <tissue>Spleen</tissue>
    </source>
</reference>
<proteinExistence type="predicted"/>
<protein>
    <recommendedName>
        <fullName>Putative per-hexamer repeat protein 4</fullName>
    </recommendedName>
</protein>
<dbReference type="EMBL" id="X12806">
    <property type="protein sequence ID" value="CAB42649.1"/>
    <property type="molecule type" value="mRNA"/>
</dbReference>
<dbReference type="PIR" id="S02186">
    <property type="entry name" value="S02186"/>
</dbReference>
<dbReference type="PaxDb" id="10090-ENSMUSP00000071235"/>
<dbReference type="AGR" id="MGI:104522"/>
<dbReference type="MGI" id="MGI:104522">
    <property type="gene designation" value="Phxr4"/>
</dbReference>
<dbReference type="HOGENOM" id="CLU_2372221_0_0_1"/>
<dbReference type="InParanoid" id="P15974"/>
<dbReference type="PRO" id="PR:P15974"/>
<dbReference type="Proteomes" id="UP000000589">
    <property type="component" value="Unplaced"/>
</dbReference>
<dbReference type="RNAct" id="P15974">
    <property type="molecule type" value="protein"/>
</dbReference>
<name>PHXR4_MOUSE</name>
<organism>
    <name type="scientific">Mus musculus</name>
    <name type="common">Mouse</name>
    <dbReference type="NCBI Taxonomy" id="10090"/>
    <lineage>
        <taxon>Eukaryota</taxon>
        <taxon>Metazoa</taxon>
        <taxon>Chordata</taxon>
        <taxon>Craniata</taxon>
        <taxon>Vertebrata</taxon>
        <taxon>Euteleostomi</taxon>
        <taxon>Mammalia</taxon>
        <taxon>Eutheria</taxon>
        <taxon>Euarchontoglires</taxon>
        <taxon>Glires</taxon>
        <taxon>Rodentia</taxon>
        <taxon>Myomorpha</taxon>
        <taxon>Muroidea</taxon>
        <taxon>Muridae</taxon>
        <taxon>Murinae</taxon>
        <taxon>Mus</taxon>
        <taxon>Mus</taxon>
    </lineage>
</organism>
<sequence length="95" mass="10493">MLCIYVCGVCLCVCFSVCMCVHVLCVYVHVCTYAHIWTTALHLRCLLPKSFSTLLFKAGFGIDTCVIPSFSMGMLVVFMASMLPTEPPPSPWVAH</sequence>
<feature type="chain" id="PRO_0000058414" description="Putative per-hexamer repeat protein 4">
    <location>
        <begin position="1"/>
        <end position="95"/>
    </location>
</feature>
<keyword id="KW-1185">Reference proteome</keyword>